<keyword id="KW-0378">Hydrolase</keyword>
<keyword id="KW-0546">Nucleotide metabolism</keyword>
<keyword id="KW-0547">Nucleotide-binding</keyword>
<dbReference type="EC" id="3.5.4.13" evidence="1"/>
<dbReference type="EMBL" id="CP000469">
    <property type="protein sequence ID" value="ABK47996.1"/>
    <property type="molecule type" value="Genomic_DNA"/>
</dbReference>
<dbReference type="RefSeq" id="WP_011622434.1">
    <property type="nucleotide sequence ID" value="NC_008577.1"/>
</dbReference>
<dbReference type="SMR" id="A0KW27"/>
<dbReference type="STRING" id="94122.Shewana3_1763"/>
<dbReference type="GeneID" id="94727754"/>
<dbReference type="KEGG" id="shn:Shewana3_1763"/>
<dbReference type="eggNOG" id="COG0717">
    <property type="taxonomic scope" value="Bacteria"/>
</dbReference>
<dbReference type="HOGENOM" id="CLU_087476_2_0_6"/>
<dbReference type="OrthoDB" id="9780956at2"/>
<dbReference type="UniPathway" id="UPA00610">
    <property type="reaction ID" value="UER00665"/>
</dbReference>
<dbReference type="Proteomes" id="UP000002589">
    <property type="component" value="Chromosome"/>
</dbReference>
<dbReference type="GO" id="GO:0008829">
    <property type="term" value="F:dCTP deaminase activity"/>
    <property type="evidence" value="ECO:0007669"/>
    <property type="project" value="UniProtKB-UniRule"/>
</dbReference>
<dbReference type="GO" id="GO:0000166">
    <property type="term" value="F:nucleotide binding"/>
    <property type="evidence" value="ECO:0007669"/>
    <property type="project" value="UniProtKB-KW"/>
</dbReference>
<dbReference type="GO" id="GO:0006226">
    <property type="term" value="P:dUMP biosynthetic process"/>
    <property type="evidence" value="ECO:0007669"/>
    <property type="project" value="UniProtKB-UniPathway"/>
</dbReference>
<dbReference type="GO" id="GO:0006229">
    <property type="term" value="P:dUTP biosynthetic process"/>
    <property type="evidence" value="ECO:0007669"/>
    <property type="project" value="UniProtKB-UniRule"/>
</dbReference>
<dbReference type="GO" id="GO:0015949">
    <property type="term" value="P:nucleobase-containing small molecule interconversion"/>
    <property type="evidence" value="ECO:0007669"/>
    <property type="project" value="TreeGrafter"/>
</dbReference>
<dbReference type="CDD" id="cd07557">
    <property type="entry name" value="trimeric_dUTPase"/>
    <property type="match status" value="1"/>
</dbReference>
<dbReference type="FunFam" id="2.70.40.10:FF:000003">
    <property type="entry name" value="dCTP deaminase"/>
    <property type="match status" value="1"/>
</dbReference>
<dbReference type="Gene3D" id="2.70.40.10">
    <property type="match status" value="1"/>
</dbReference>
<dbReference type="HAMAP" id="MF_00146">
    <property type="entry name" value="dCTP_deaminase"/>
    <property type="match status" value="1"/>
</dbReference>
<dbReference type="InterPro" id="IPR011962">
    <property type="entry name" value="dCTP_deaminase"/>
</dbReference>
<dbReference type="InterPro" id="IPR036157">
    <property type="entry name" value="dUTPase-like_sf"/>
</dbReference>
<dbReference type="InterPro" id="IPR033704">
    <property type="entry name" value="dUTPase_trimeric"/>
</dbReference>
<dbReference type="NCBIfam" id="TIGR02274">
    <property type="entry name" value="dCTP_deam"/>
    <property type="match status" value="1"/>
</dbReference>
<dbReference type="PANTHER" id="PTHR42680">
    <property type="entry name" value="DCTP DEAMINASE"/>
    <property type="match status" value="1"/>
</dbReference>
<dbReference type="PANTHER" id="PTHR42680:SF3">
    <property type="entry name" value="DCTP DEAMINASE"/>
    <property type="match status" value="1"/>
</dbReference>
<dbReference type="Pfam" id="PF22769">
    <property type="entry name" value="DCD"/>
    <property type="match status" value="1"/>
</dbReference>
<dbReference type="SUPFAM" id="SSF51283">
    <property type="entry name" value="dUTPase-like"/>
    <property type="match status" value="1"/>
</dbReference>
<reference key="1">
    <citation type="submission" date="2006-09" db="EMBL/GenBank/DDBJ databases">
        <title>Complete sequence of chromosome 1 of Shewanella sp. ANA-3.</title>
        <authorList>
            <person name="Copeland A."/>
            <person name="Lucas S."/>
            <person name="Lapidus A."/>
            <person name="Barry K."/>
            <person name="Detter J.C."/>
            <person name="Glavina del Rio T."/>
            <person name="Hammon N."/>
            <person name="Israni S."/>
            <person name="Dalin E."/>
            <person name="Tice H."/>
            <person name="Pitluck S."/>
            <person name="Chertkov O."/>
            <person name="Brettin T."/>
            <person name="Bruce D."/>
            <person name="Han C."/>
            <person name="Tapia R."/>
            <person name="Gilna P."/>
            <person name="Schmutz J."/>
            <person name="Larimer F."/>
            <person name="Land M."/>
            <person name="Hauser L."/>
            <person name="Kyrpides N."/>
            <person name="Kim E."/>
            <person name="Newman D."/>
            <person name="Salticov C."/>
            <person name="Konstantinidis K."/>
            <person name="Klappenback J."/>
            <person name="Tiedje J."/>
            <person name="Richardson P."/>
        </authorList>
    </citation>
    <scope>NUCLEOTIDE SEQUENCE [LARGE SCALE GENOMIC DNA]</scope>
    <source>
        <strain>ANA-3</strain>
    </source>
</reference>
<gene>
    <name evidence="1" type="primary">dcd</name>
    <name type="ordered locus">Shewana3_1763</name>
</gene>
<evidence type="ECO:0000255" key="1">
    <source>
        <dbReference type="HAMAP-Rule" id="MF_00146"/>
    </source>
</evidence>
<evidence type="ECO:0000256" key="2">
    <source>
        <dbReference type="SAM" id="MobiDB-lite"/>
    </source>
</evidence>
<name>DCD_SHESA</name>
<protein>
    <recommendedName>
        <fullName evidence="1">dCTP deaminase</fullName>
        <ecNumber evidence="1">3.5.4.13</ecNumber>
    </recommendedName>
    <alternativeName>
        <fullName evidence="1">Deoxycytidine triphosphate deaminase</fullName>
    </alternativeName>
</protein>
<proteinExistence type="inferred from homology"/>
<accession>A0KW27</accession>
<organism>
    <name type="scientific">Shewanella sp. (strain ANA-3)</name>
    <dbReference type="NCBI Taxonomy" id="94122"/>
    <lineage>
        <taxon>Bacteria</taxon>
        <taxon>Pseudomonadati</taxon>
        <taxon>Pseudomonadota</taxon>
        <taxon>Gammaproteobacteria</taxon>
        <taxon>Alteromonadales</taxon>
        <taxon>Shewanellaceae</taxon>
        <taxon>Shewanella</taxon>
    </lineage>
</organism>
<sequence>MRLTDIEIEQALDNGSIVIEPRPSNDAISGVSVDVRLGGQFRVFKDHTAPFIDLSGPSTEVQAALDRVMSEIIEIPDGEAFFLHPGELALAVTYESVTLPADIVGWLDGRSSLARLGLMVHVTAHRIDPGWQGKIVLEFYNSGKLPLALRPRMTIGALNFERLSGPVARPYNKRKNAKYKDQQDAVASRISQD</sequence>
<feature type="chain" id="PRO_1000009812" description="dCTP deaminase">
    <location>
        <begin position="1"/>
        <end position="193"/>
    </location>
</feature>
<feature type="region of interest" description="Disordered" evidence="2">
    <location>
        <begin position="173"/>
        <end position="193"/>
    </location>
</feature>
<feature type="active site" description="Proton donor/acceptor" evidence="1">
    <location>
        <position position="138"/>
    </location>
</feature>
<feature type="binding site" evidence="1">
    <location>
        <begin position="110"/>
        <end position="115"/>
    </location>
    <ligand>
        <name>dCTP</name>
        <dbReference type="ChEBI" id="CHEBI:61481"/>
    </ligand>
</feature>
<feature type="binding site" evidence="1">
    <location>
        <position position="128"/>
    </location>
    <ligand>
        <name>dCTP</name>
        <dbReference type="ChEBI" id="CHEBI:61481"/>
    </ligand>
</feature>
<feature type="binding site" evidence="1">
    <location>
        <begin position="136"/>
        <end position="138"/>
    </location>
    <ligand>
        <name>dCTP</name>
        <dbReference type="ChEBI" id="CHEBI:61481"/>
    </ligand>
</feature>
<feature type="binding site" evidence="1">
    <location>
        <position position="171"/>
    </location>
    <ligand>
        <name>dCTP</name>
        <dbReference type="ChEBI" id="CHEBI:61481"/>
    </ligand>
</feature>
<feature type="binding site" evidence="1">
    <location>
        <position position="178"/>
    </location>
    <ligand>
        <name>dCTP</name>
        <dbReference type="ChEBI" id="CHEBI:61481"/>
    </ligand>
</feature>
<feature type="binding site" evidence="1">
    <location>
        <position position="182"/>
    </location>
    <ligand>
        <name>dCTP</name>
        <dbReference type="ChEBI" id="CHEBI:61481"/>
    </ligand>
</feature>
<comment type="function">
    <text evidence="1">Catalyzes the deamination of dCTP to dUTP.</text>
</comment>
<comment type="catalytic activity">
    <reaction evidence="1">
        <text>dCTP + H2O + H(+) = dUTP + NH4(+)</text>
        <dbReference type="Rhea" id="RHEA:22680"/>
        <dbReference type="ChEBI" id="CHEBI:15377"/>
        <dbReference type="ChEBI" id="CHEBI:15378"/>
        <dbReference type="ChEBI" id="CHEBI:28938"/>
        <dbReference type="ChEBI" id="CHEBI:61481"/>
        <dbReference type="ChEBI" id="CHEBI:61555"/>
        <dbReference type="EC" id="3.5.4.13"/>
    </reaction>
</comment>
<comment type="pathway">
    <text evidence="1">Pyrimidine metabolism; dUMP biosynthesis; dUMP from dCTP (dUTP route): step 1/2.</text>
</comment>
<comment type="subunit">
    <text evidence="1">Homotrimer.</text>
</comment>
<comment type="similarity">
    <text evidence="1">Belongs to the dCTP deaminase family.</text>
</comment>